<accession>P35417</accession>
<protein>
    <recommendedName>
        <fullName>Paramyosin</fullName>
    </recommendedName>
</protein>
<reference key="1">
    <citation type="journal article" date="1993" name="Parasitol. Res.">
        <title>Paramyosin of Echinococcus granulosus: cDNA sequence and characterization of a tegumental antigen.</title>
        <authorList>
            <person name="Muehlschlegel F."/>
            <person name="Sygulla L."/>
            <person name="Frosch P."/>
            <person name="Massetti P."/>
            <person name="Frosch M."/>
        </authorList>
    </citation>
    <scope>NUCLEOTIDE SEQUENCE [MRNA]</scope>
</reference>
<organism>
    <name type="scientific">Echinococcus granulosus</name>
    <name type="common">Hydatid tapeworm</name>
    <dbReference type="NCBI Taxonomy" id="6210"/>
    <lineage>
        <taxon>Eukaryota</taxon>
        <taxon>Metazoa</taxon>
        <taxon>Spiralia</taxon>
        <taxon>Lophotrochozoa</taxon>
        <taxon>Platyhelminthes</taxon>
        <taxon>Cestoda</taxon>
        <taxon>Eucestoda</taxon>
        <taxon>Cyclophyllidea</taxon>
        <taxon>Taeniidae</taxon>
        <taxon>Echinococcus</taxon>
        <taxon>Echinococcus granulosus group</taxon>
    </lineage>
</organism>
<evidence type="ECO:0000250" key="1"/>
<evidence type="ECO:0000255" key="2"/>
<evidence type="ECO:0000305" key="3"/>
<keyword id="KW-0175">Coiled coil</keyword>
<keyword id="KW-0963">Cytoplasm</keyword>
<keyword id="KW-0505">Motor protein</keyword>
<keyword id="KW-0514">Muscle protein</keyword>
<keyword id="KW-0518">Myosin</keyword>
<keyword id="KW-0787">Thick filament</keyword>
<feature type="chain" id="PRO_0000211251" description="Paramyosin">
    <location>
        <begin position="1"/>
        <end position="863"/>
    </location>
</feature>
<feature type="region of interest" description="Nonhelical region" evidence="2">
    <location>
        <begin position="1"/>
        <end position="26"/>
    </location>
</feature>
<feature type="region of interest" description="Nonhelical region" evidence="2">
    <location>
        <begin position="837"/>
        <end position="863"/>
    </location>
</feature>
<feature type="coiled-coil region" evidence="2">
    <location>
        <begin position="27"/>
        <end position="836"/>
    </location>
</feature>
<name>MYSP_ECHGR</name>
<dbReference type="EMBL" id="Z21787">
    <property type="protein sequence ID" value="CAA79849.1"/>
    <property type="molecule type" value="mRNA"/>
</dbReference>
<dbReference type="PIR" id="S37040">
    <property type="entry name" value="S37040"/>
</dbReference>
<dbReference type="SMR" id="P35417"/>
<dbReference type="OrthoDB" id="2018427at2759"/>
<dbReference type="Proteomes" id="UP000492820">
    <property type="component" value="Unplaced"/>
</dbReference>
<dbReference type="GO" id="GO:0030016">
    <property type="term" value="C:myofibril"/>
    <property type="evidence" value="ECO:0007669"/>
    <property type="project" value="UniProtKB-SubCell"/>
</dbReference>
<dbReference type="GO" id="GO:0016459">
    <property type="term" value="C:myosin complex"/>
    <property type="evidence" value="ECO:0007669"/>
    <property type="project" value="UniProtKB-KW"/>
</dbReference>
<dbReference type="GO" id="GO:0032982">
    <property type="term" value="C:myosin filament"/>
    <property type="evidence" value="ECO:0007669"/>
    <property type="project" value="UniProtKB-KW"/>
</dbReference>
<dbReference type="Gene3D" id="1.20.5.340">
    <property type="match status" value="3"/>
</dbReference>
<dbReference type="Gene3D" id="1.20.5.370">
    <property type="match status" value="1"/>
</dbReference>
<dbReference type="Gene3D" id="1.20.5.1160">
    <property type="entry name" value="Vasodilator-stimulated phosphoprotein"/>
    <property type="match status" value="1"/>
</dbReference>
<dbReference type="InterPro" id="IPR002928">
    <property type="entry name" value="Myosin_tail"/>
</dbReference>
<dbReference type="InterPro" id="IPR014751">
    <property type="entry name" value="XRCC4-like_C"/>
</dbReference>
<dbReference type="PANTHER" id="PTHR46349">
    <property type="entry name" value="CINGULIN-LIKE PROTEIN 1-RELATED"/>
    <property type="match status" value="1"/>
</dbReference>
<dbReference type="PANTHER" id="PTHR46349:SF6">
    <property type="entry name" value="MYOSIN-6-LIKE"/>
    <property type="match status" value="1"/>
</dbReference>
<dbReference type="Pfam" id="PF01576">
    <property type="entry name" value="Myosin_tail_1"/>
    <property type="match status" value="1"/>
</dbReference>
<dbReference type="SUPFAM" id="SSF90257">
    <property type="entry name" value="Myosin rod fragments"/>
    <property type="match status" value="2"/>
</dbReference>
<dbReference type="SUPFAM" id="SSF57997">
    <property type="entry name" value="Tropomyosin"/>
    <property type="match status" value="1"/>
</dbReference>
<comment type="function">
    <text>Paramyosin is a major structural component of many thick filaments isolated from invertebrate muscles.</text>
</comment>
<comment type="subunit">
    <text evidence="1">Homodimer.</text>
</comment>
<comment type="subcellular location">
    <subcellularLocation>
        <location>Cytoplasm</location>
        <location>Myofibril</location>
    </subcellularLocation>
    <text>Thick filaments of the myofibrils.</text>
</comment>
<comment type="similarity">
    <text evidence="3">Belongs to the paramyosin family.</text>
</comment>
<sequence length="863" mass="98741">MSESHVKISRTIIRGTSPSTVRLESPVRELEDLLDLERDARVRSERNANELSIQLDTMTERLDELSGTSSQTQDAIRRKDMEIANVRKDLENANAAFETAEATLRRKHNTMISEISSEVENLQKQKGRAEKDKSQLMLEIDNVLGQLDGALKAKASAESKLEGLDSQLTRLKALTDDLQRQMADVNSAKSRLAAENFELVRVNQEYEAQVVNFSKTKSVLEGQLDDLKRAMDEDARNRLNLQTQLSSLQMDYDNLQARYEEEAEAAGNLRNQVAKFNADMAALKTRLERELMAKTEEFEELKRKLTVRITELEDIAEHERTRANNLEKTKVKLTIEIKDLQAENEALAAENGELTHRAKQAENLANELQRRVDEMTVEINTLNSANNALEGDNMRLKGQVGDLTDRIANLDRENRQLGDQLKETKSALRDANRRLTDLEALRSQLEADGDNLASALHDAEEALKELEVKYVASQNALNHLKSEMEQRLREKDEELENLRKSTTRTIEELTTTISEMEVRFKSDMSRLKKKYEATISELEVQLDVANKANASLNRENKALAQRVQELQTALEDERRAREAAESNLQVSERKRIALTSEVEEIRSQLELSDRARKNAESELNDANGRISELTMSVNTLTNDKRRLEGDIGVMQGDLDEAVNARKAAEDRADRLNAEVLRLADELRQEQENYKRAETLRKQLEIEIREITVKLEEAEAFATREGRRMVQKLQNRVRELEAELDGEIRRAKEAFASARKYERQFKELQTQSEDDKRMILELQDLLDKTQIKMKAYKRQLEEQEEVSQLTMSKYRKAQQQIEEAEHRADMAERTITIKRTIGGPGSRAVSVVREINSVSRGNRATSIM</sequence>
<proteinExistence type="evidence at transcript level"/>